<organism>
    <name type="scientific">Mycolicibacterium smegmatis (strain ATCC 700084 / mc(2)155)</name>
    <name type="common">Mycobacterium smegmatis</name>
    <dbReference type="NCBI Taxonomy" id="246196"/>
    <lineage>
        <taxon>Bacteria</taxon>
        <taxon>Bacillati</taxon>
        <taxon>Actinomycetota</taxon>
        <taxon>Actinomycetes</taxon>
        <taxon>Mycobacteriales</taxon>
        <taxon>Mycobacteriaceae</taxon>
        <taxon>Mycolicibacterium</taxon>
    </lineage>
</organism>
<sequence>MPRKGPAPKRPLVNDPVYGSQLVTQLVNKVLLEGKKSLAERIVYGALEQAREKTGTDPVVTLKRALDNVKPALEVRSRRVGGATYQVPVEVRPDRSTTLALRWLVNFSRQRREKTMVERLANEILDASNGLGASVKRREDTHKMAEANRAFAHYRW</sequence>
<dbReference type="EMBL" id="CP000480">
    <property type="protein sequence ID" value="ABK74236.1"/>
    <property type="molecule type" value="Genomic_DNA"/>
</dbReference>
<dbReference type="EMBL" id="CP001663">
    <property type="protein sequence ID" value="AFP37834.1"/>
    <property type="molecule type" value="Genomic_DNA"/>
</dbReference>
<dbReference type="RefSeq" id="WP_003892787.1">
    <property type="nucleotide sequence ID" value="NZ_SIJM01000030.1"/>
</dbReference>
<dbReference type="RefSeq" id="YP_885785.1">
    <property type="nucleotide sequence ID" value="NC_008596.1"/>
</dbReference>
<dbReference type="PDB" id="5O5J">
    <property type="method" value="EM"/>
    <property type="resolution" value="3.45 A"/>
    <property type="chains" value="G=1-156"/>
</dbReference>
<dbReference type="PDB" id="5O61">
    <property type="method" value="EM"/>
    <property type="resolution" value="3.31 A"/>
    <property type="chains" value="BG=1-156"/>
</dbReference>
<dbReference type="PDB" id="5XYU">
    <property type="method" value="EM"/>
    <property type="resolution" value="3.45 A"/>
    <property type="chains" value="G=1-156"/>
</dbReference>
<dbReference type="PDB" id="5ZEB">
    <property type="method" value="EM"/>
    <property type="resolution" value="3.40 A"/>
    <property type="chains" value="g=1-156"/>
</dbReference>
<dbReference type="PDB" id="5ZEP">
    <property type="method" value="EM"/>
    <property type="resolution" value="3.40 A"/>
    <property type="chains" value="g=1-156"/>
</dbReference>
<dbReference type="PDB" id="5ZEU">
    <property type="method" value="EM"/>
    <property type="resolution" value="3.70 A"/>
    <property type="chains" value="g=1-156"/>
</dbReference>
<dbReference type="PDB" id="6DZI">
    <property type="method" value="EM"/>
    <property type="resolution" value="3.46 A"/>
    <property type="chains" value="p=2-156"/>
</dbReference>
<dbReference type="PDB" id="6DZK">
    <property type="method" value="EM"/>
    <property type="resolution" value="3.60 A"/>
    <property type="chains" value="G=1-156"/>
</dbReference>
<dbReference type="PDB" id="8FR8">
    <property type="method" value="EM"/>
    <property type="resolution" value="2.76 A"/>
    <property type="chains" value="h=2-156"/>
</dbReference>
<dbReference type="PDB" id="8V9J">
    <property type="method" value="EM"/>
    <property type="resolution" value="3.10 A"/>
    <property type="chains" value="g=1-156"/>
</dbReference>
<dbReference type="PDB" id="8V9K">
    <property type="method" value="EM"/>
    <property type="resolution" value="3.10 A"/>
    <property type="chains" value="g=1-156"/>
</dbReference>
<dbReference type="PDB" id="8V9L">
    <property type="method" value="EM"/>
    <property type="resolution" value="3.00 A"/>
    <property type="chains" value="g=1-156"/>
</dbReference>
<dbReference type="PDB" id="8VIO">
    <property type="method" value="EM"/>
    <property type="resolution" value="3.26 A"/>
    <property type="chains" value="m=1-156"/>
</dbReference>
<dbReference type="PDB" id="8WHX">
    <property type="method" value="EM"/>
    <property type="resolution" value="2.80 A"/>
    <property type="chains" value="h=1-156"/>
</dbReference>
<dbReference type="PDB" id="8WI7">
    <property type="method" value="EM"/>
    <property type="resolution" value="3.50 A"/>
    <property type="chains" value="h=1-156"/>
</dbReference>
<dbReference type="PDB" id="8WI9">
    <property type="method" value="EM"/>
    <property type="resolution" value="3.50 A"/>
    <property type="chains" value="h=1-156"/>
</dbReference>
<dbReference type="PDB" id="8WIB">
    <property type="method" value="EM"/>
    <property type="resolution" value="3.50 A"/>
    <property type="chains" value="h=1-156"/>
</dbReference>
<dbReference type="PDB" id="8WID">
    <property type="method" value="EM"/>
    <property type="resolution" value="3.50 A"/>
    <property type="chains" value="h=1-156"/>
</dbReference>
<dbReference type="PDB" id="8WIF">
    <property type="method" value="EM"/>
    <property type="resolution" value="2.90 A"/>
    <property type="chains" value="h=1-156"/>
</dbReference>
<dbReference type="PDBsum" id="5O5J"/>
<dbReference type="PDBsum" id="5O61"/>
<dbReference type="PDBsum" id="5XYU"/>
<dbReference type="PDBsum" id="5ZEB"/>
<dbReference type="PDBsum" id="5ZEP"/>
<dbReference type="PDBsum" id="5ZEU"/>
<dbReference type="PDBsum" id="6DZI"/>
<dbReference type="PDBsum" id="6DZK"/>
<dbReference type="PDBsum" id="8FR8"/>
<dbReference type="PDBsum" id="8V9J"/>
<dbReference type="PDBsum" id="8V9K"/>
<dbReference type="PDBsum" id="8V9L"/>
<dbReference type="PDBsum" id="8VIO"/>
<dbReference type="PDBsum" id="8WHX"/>
<dbReference type="PDBsum" id="8WI7"/>
<dbReference type="PDBsum" id="8WI9"/>
<dbReference type="PDBsum" id="8WIB"/>
<dbReference type="PDBsum" id="8WID"/>
<dbReference type="PDBsum" id="8WIF"/>
<dbReference type="EMDB" id="EMD-29397"/>
<dbReference type="EMDB" id="EMD-3748"/>
<dbReference type="EMDB" id="EMD-3751"/>
<dbReference type="EMDB" id="EMD-37551"/>
<dbReference type="EMDB" id="EMD-37559"/>
<dbReference type="EMDB" id="EMD-37561"/>
<dbReference type="EMDB" id="EMD-37562"/>
<dbReference type="EMDB" id="EMD-37564"/>
<dbReference type="EMDB" id="EMD-37565"/>
<dbReference type="EMDB" id="EMD-43074"/>
<dbReference type="EMDB" id="EMD-43075"/>
<dbReference type="EMDB" id="EMD-43076"/>
<dbReference type="EMDB" id="EMD-43267"/>
<dbReference type="EMDB" id="EMD-6790"/>
<dbReference type="EMDB" id="EMD-6920"/>
<dbReference type="EMDB" id="EMD-6921"/>
<dbReference type="EMDB" id="EMD-6923"/>
<dbReference type="EMDB" id="EMD-8932"/>
<dbReference type="EMDB" id="EMD-8934"/>
<dbReference type="SMR" id="A0QS97"/>
<dbReference type="IntAct" id="A0QS97">
    <property type="interactions" value="1"/>
</dbReference>
<dbReference type="STRING" id="246196.MSMEG_1399"/>
<dbReference type="PaxDb" id="246196-MSMEI_1361"/>
<dbReference type="GeneID" id="93456242"/>
<dbReference type="KEGG" id="msb:LJ00_06975"/>
<dbReference type="KEGG" id="msg:MSMEI_1361"/>
<dbReference type="KEGG" id="msm:MSMEG_1399"/>
<dbReference type="PATRIC" id="fig|246196.19.peg.1382"/>
<dbReference type="eggNOG" id="COG0049">
    <property type="taxonomic scope" value="Bacteria"/>
</dbReference>
<dbReference type="OrthoDB" id="9807653at2"/>
<dbReference type="Proteomes" id="UP000000757">
    <property type="component" value="Chromosome"/>
</dbReference>
<dbReference type="Proteomes" id="UP000006158">
    <property type="component" value="Chromosome"/>
</dbReference>
<dbReference type="GO" id="GO:0015935">
    <property type="term" value="C:small ribosomal subunit"/>
    <property type="evidence" value="ECO:0007669"/>
    <property type="project" value="InterPro"/>
</dbReference>
<dbReference type="GO" id="GO:0019843">
    <property type="term" value="F:rRNA binding"/>
    <property type="evidence" value="ECO:0007669"/>
    <property type="project" value="UniProtKB-UniRule"/>
</dbReference>
<dbReference type="GO" id="GO:0003735">
    <property type="term" value="F:structural constituent of ribosome"/>
    <property type="evidence" value="ECO:0007669"/>
    <property type="project" value="InterPro"/>
</dbReference>
<dbReference type="GO" id="GO:0000049">
    <property type="term" value="F:tRNA binding"/>
    <property type="evidence" value="ECO:0007669"/>
    <property type="project" value="UniProtKB-UniRule"/>
</dbReference>
<dbReference type="GO" id="GO:0006412">
    <property type="term" value="P:translation"/>
    <property type="evidence" value="ECO:0007669"/>
    <property type="project" value="UniProtKB-UniRule"/>
</dbReference>
<dbReference type="CDD" id="cd14869">
    <property type="entry name" value="uS7_Bacteria"/>
    <property type="match status" value="1"/>
</dbReference>
<dbReference type="FunFam" id="1.10.455.10:FF:000001">
    <property type="entry name" value="30S ribosomal protein S7"/>
    <property type="match status" value="1"/>
</dbReference>
<dbReference type="Gene3D" id="1.10.455.10">
    <property type="entry name" value="Ribosomal protein S7 domain"/>
    <property type="match status" value="1"/>
</dbReference>
<dbReference type="HAMAP" id="MF_00480_B">
    <property type="entry name" value="Ribosomal_uS7_B"/>
    <property type="match status" value="1"/>
</dbReference>
<dbReference type="InterPro" id="IPR000235">
    <property type="entry name" value="Ribosomal_uS7"/>
</dbReference>
<dbReference type="InterPro" id="IPR005717">
    <property type="entry name" value="Ribosomal_uS7_bac/org-type"/>
</dbReference>
<dbReference type="InterPro" id="IPR020606">
    <property type="entry name" value="Ribosomal_uS7_CS"/>
</dbReference>
<dbReference type="InterPro" id="IPR023798">
    <property type="entry name" value="Ribosomal_uS7_dom"/>
</dbReference>
<dbReference type="InterPro" id="IPR036823">
    <property type="entry name" value="Ribosomal_uS7_dom_sf"/>
</dbReference>
<dbReference type="NCBIfam" id="TIGR01029">
    <property type="entry name" value="rpsG_bact"/>
    <property type="match status" value="1"/>
</dbReference>
<dbReference type="PANTHER" id="PTHR11205">
    <property type="entry name" value="RIBOSOMAL PROTEIN S7"/>
    <property type="match status" value="1"/>
</dbReference>
<dbReference type="Pfam" id="PF00177">
    <property type="entry name" value="Ribosomal_S7"/>
    <property type="match status" value="1"/>
</dbReference>
<dbReference type="PIRSF" id="PIRSF002122">
    <property type="entry name" value="RPS7p_RPS7a_RPS5e_RPS7o"/>
    <property type="match status" value="1"/>
</dbReference>
<dbReference type="SUPFAM" id="SSF47973">
    <property type="entry name" value="Ribosomal protein S7"/>
    <property type="match status" value="1"/>
</dbReference>
<dbReference type="PROSITE" id="PS00052">
    <property type="entry name" value="RIBOSOMAL_S7"/>
    <property type="match status" value="1"/>
</dbReference>
<feature type="chain" id="PRO_1000014234" description="Small ribosomal subunit protein uS7">
    <location>
        <begin position="1"/>
        <end position="156"/>
    </location>
</feature>
<feature type="strand" evidence="3">
    <location>
        <begin position="16"/>
        <end position="18"/>
    </location>
</feature>
<feature type="helix" evidence="4">
    <location>
        <begin position="21"/>
        <end position="30"/>
    </location>
</feature>
<feature type="helix" evidence="4">
    <location>
        <begin position="36"/>
        <end position="52"/>
    </location>
</feature>
<feature type="turn" evidence="4">
    <location>
        <begin position="53"/>
        <end position="55"/>
    </location>
</feature>
<feature type="strand" evidence="4">
    <location>
        <begin position="56"/>
        <end position="58"/>
    </location>
</feature>
<feature type="helix" evidence="4">
    <location>
        <begin position="59"/>
        <end position="67"/>
    </location>
</feature>
<feature type="strand" evidence="4">
    <location>
        <begin position="72"/>
        <end position="76"/>
    </location>
</feature>
<feature type="strand" evidence="4">
    <location>
        <begin position="87"/>
        <end position="90"/>
    </location>
</feature>
<feature type="helix" evidence="4">
    <location>
        <begin position="93"/>
        <end position="110"/>
    </location>
</feature>
<feature type="strand" evidence="3">
    <location>
        <begin position="113"/>
        <end position="115"/>
    </location>
</feature>
<feature type="helix" evidence="4">
    <location>
        <begin position="116"/>
        <end position="129"/>
    </location>
</feature>
<feature type="helix" evidence="4">
    <location>
        <begin position="133"/>
        <end position="146"/>
    </location>
</feature>
<feature type="helix" evidence="3">
    <location>
        <begin position="148"/>
        <end position="154"/>
    </location>
</feature>
<gene>
    <name evidence="1" type="primary">rpsG</name>
    <name type="ordered locus">MSMEG_1399</name>
    <name type="ordered locus">MSMEI_1361</name>
</gene>
<comment type="function">
    <text evidence="1">One of the primary rRNA binding proteins, it binds directly to 16S rRNA where it nucleates assembly of the head domain of the 30S subunit. Is located at the subunit interface close to the decoding center, probably blocks exit of the E-site tRNA.</text>
</comment>
<comment type="subunit">
    <text evidence="1">Part of the 30S ribosomal subunit. Contacts proteins S9 and S11.</text>
</comment>
<comment type="similarity">
    <text evidence="1">Belongs to the universal ribosomal protein uS7 family.</text>
</comment>
<keyword id="KW-0002">3D-structure</keyword>
<keyword id="KW-1185">Reference proteome</keyword>
<keyword id="KW-0687">Ribonucleoprotein</keyword>
<keyword id="KW-0689">Ribosomal protein</keyword>
<keyword id="KW-0694">RNA-binding</keyword>
<keyword id="KW-0699">rRNA-binding</keyword>
<keyword id="KW-0820">tRNA-binding</keyword>
<reference key="1">
    <citation type="submission" date="2006-10" db="EMBL/GenBank/DDBJ databases">
        <authorList>
            <person name="Fleischmann R.D."/>
            <person name="Dodson R.J."/>
            <person name="Haft D.H."/>
            <person name="Merkel J.S."/>
            <person name="Nelson W.C."/>
            <person name="Fraser C.M."/>
        </authorList>
    </citation>
    <scope>NUCLEOTIDE SEQUENCE [LARGE SCALE GENOMIC DNA]</scope>
    <source>
        <strain>ATCC 700084 / mc(2)155</strain>
    </source>
</reference>
<reference key="2">
    <citation type="journal article" date="2007" name="Genome Biol.">
        <title>Interrupted coding sequences in Mycobacterium smegmatis: authentic mutations or sequencing errors?</title>
        <authorList>
            <person name="Deshayes C."/>
            <person name="Perrodou E."/>
            <person name="Gallien S."/>
            <person name="Euphrasie D."/>
            <person name="Schaeffer C."/>
            <person name="Van-Dorsselaer A."/>
            <person name="Poch O."/>
            <person name="Lecompte O."/>
            <person name="Reyrat J.-M."/>
        </authorList>
    </citation>
    <scope>NUCLEOTIDE SEQUENCE [LARGE SCALE GENOMIC DNA]</scope>
    <source>
        <strain>ATCC 700084 / mc(2)155</strain>
    </source>
</reference>
<reference key="3">
    <citation type="journal article" date="2009" name="Genome Res.">
        <title>Ortho-proteogenomics: multiple proteomes investigation through orthology and a new MS-based protocol.</title>
        <authorList>
            <person name="Gallien S."/>
            <person name="Perrodou E."/>
            <person name="Carapito C."/>
            <person name="Deshayes C."/>
            <person name="Reyrat J.-M."/>
            <person name="Van Dorsselaer A."/>
            <person name="Poch O."/>
            <person name="Schaeffer C."/>
            <person name="Lecompte O."/>
        </authorList>
    </citation>
    <scope>NUCLEOTIDE SEQUENCE [LARGE SCALE GENOMIC DNA]</scope>
    <scope>IDENTIFICATION BY MASS SPECTROMETRY [LARGE SCALE ANALYSIS]</scope>
    <source>
        <strain>ATCC 700084 / mc(2)155</strain>
    </source>
</reference>
<proteinExistence type="evidence at protein level"/>
<accession>A0QS97</accession>
<accession>I7G5F1</accession>
<evidence type="ECO:0000255" key="1">
    <source>
        <dbReference type="HAMAP-Rule" id="MF_00480"/>
    </source>
</evidence>
<evidence type="ECO:0000305" key="2"/>
<evidence type="ECO:0007829" key="3">
    <source>
        <dbReference type="PDB" id="5O5J"/>
    </source>
</evidence>
<evidence type="ECO:0007829" key="4">
    <source>
        <dbReference type="PDB" id="5XYU"/>
    </source>
</evidence>
<name>RS7_MYCS2</name>
<protein>
    <recommendedName>
        <fullName evidence="1">Small ribosomal subunit protein uS7</fullName>
    </recommendedName>
    <alternativeName>
        <fullName evidence="2">30S ribosomal protein S7</fullName>
    </alternativeName>
</protein>